<keyword id="KW-0687">Ribonucleoprotein</keyword>
<keyword id="KW-0689">Ribosomal protein</keyword>
<keyword id="KW-0694">RNA-binding</keyword>
<keyword id="KW-0699">rRNA-binding</keyword>
<keyword id="KW-0820">tRNA-binding</keyword>
<feature type="chain" id="PRO_1000206416" description="Small ribosomal subunit protein uS7">
    <location>
        <begin position="1"/>
        <end position="156"/>
    </location>
</feature>
<dbReference type="EMBL" id="FM204884">
    <property type="protein sequence ID" value="CAX00476.1"/>
    <property type="molecule type" value="Genomic_DNA"/>
</dbReference>
<dbReference type="SMR" id="C0MF26"/>
<dbReference type="KEGG" id="seq:SZO_16900"/>
<dbReference type="eggNOG" id="COG0049">
    <property type="taxonomic scope" value="Bacteria"/>
</dbReference>
<dbReference type="HOGENOM" id="CLU_072226_1_1_9"/>
<dbReference type="Proteomes" id="UP000001368">
    <property type="component" value="Chromosome"/>
</dbReference>
<dbReference type="GO" id="GO:0015935">
    <property type="term" value="C:small ribosomal subunit"/>
    <property type="evidence" value="ECO:0007669"/>
    <property type="project" value="InterPro"/>
</dbReference>
<dbReference type="GO" id="GO:0019843">
    <property type="term" value="F:rRNA binding"/>
    <property type="evidence" value="ECO:0007669"/>
    <property type="project" value="UniProtKB-UniRule"/>
</dbReference>
<dbReference type="GO" id="GO:0003735">
    <property type="term" value="F:structural constituent of ribosome"/>
    <property type="evidence" value="ECO:0007669"/>
    <property type="project" value="InterPro"/>
</dbReference>
<dbReference type="GO" id="GO:0000049">
    <property type="term" value="F:tRNA binding"/>
    <property type="evidence" value="ECO:0007669"/>
    <property type="project" value="UniProtKB-UniRule"/>
</dbReference>
<dbReference type="GO" id="GO:0006412">
    <property type="term" value="P:translation"/>
    <property type="evidence" value="ECO:0007669"/>
    <property type="project" value="UniProtKB-UniRule"/>
</dbReference>
<dbReference type="CDD" id="cd14869">
    <property type="entry name" value="uS7_Bacteria"/>
    <property type="match status" value="1"/>
</dbReference>
<dbReference type="FunFam" id="1.10.455.10:FF:000001">
    <property type="entry name" value="30S ribosomal protein S7"/>
    <property type="match status" value="1"/>
</dbReference>
<dbReference type="Gene3D" id="1.10.455.10">
    <property type="entry name" value="Ribosomal protein S7 domain"/>
    <property type="match status" value="1"/>
</dbReference>
<dbReference type="HAMAP" id="MF_00480_B">
    <property type="entry name" value="Ribosomal_uS7_B"/>
    <property type="match status" value="1"/>
</dbReference>
<dbReference type="InterPro" id="IPR000235">
    <property type="entry name" value="Ribosomal_uS7"/>
</dbReference>
<dbReference type="InterPro" id="IPR005717">
    <property type="entry name" value="Ribosomal_uS7_bac/org-type"/>
</dbReference>
<dbReference type="InterPro" id="IPR020606">
    <property type="entry name" value="Ribosomal_uS7_CS"/>
</dbReference>
<dbReference type="InterPro" id="IPR023798">
    <property type="entry name" value="Ribosomal_uS7_dom"/>
</dbReference>
<dbReference type="InterPro" id="IPR036823">
    <property type="entry name" value="Ribosomal_uS7_dom_sf"/>
</dbReference>
<dbReference type="NCBIfam" id="TIGR01029">
    <property type="entry name" value="rpsG_bact"/>
    <property type="match status" value="1"/>
</dbReference>
<dbReference type="PANTHER" id="PTHR11205">
    <property type="entry name" value="RIBOSOMAL PROTEIN S7"/>
    <property type="match status" value="1"/>
</dbReference>
<dbReference type="Pfam" id="PF00177">
    <property type="entry name" value="Ribosomal_S7"/>
    <property type="match status" value="1"/>
</dbReference>
<dbReference type="PIRSF" id="PIRSF002122">
    <property type="entry name" value="RPS7p_RPS7a_RPS5e_RPS7o"/>
    <property type="match status" value="1"/>
</dbReference>
<dbReference type="SUPFAM" id="SSF47973">
    <property type="entry name" value="Ribosomal protein S7"/>
    <property type="match status" value="1"/>
</dbReference>
<dbReference type="PROSITE" id="PS00052">
    <property type="entry name" value="RIBOSOMAL_S7"/>
    <property type="match status" value="1"/>
</dbReference>
<sequence length="156" mass="17741">MSRKNRAPKREVLPDPLYNSKLVTRLINRIMLDGKRGTASSIVYDAFSEIKEATGNDALEVFETAMDNIMPVLEVRARRVGGSNYQVPVEVRPERRTTLGLRWLVTASRARGEHTMKDRLAKEIMDAANNTGASVKKREDTHKMAEANRAFAHFRW</sequence>
<accession>C0MF26</accession>
<comment type="function">
    <text evidence="1">One of the primary rRNA binding proteins, it binds directly to 16S rRNA where it nucleates assembly of the head domain of the 30S subunit. Is located at the subunit interface close to the decoding center, probably blocks exit of the E-site tRNA.</text>
</comment>
<comment type="subunit">
    <text evidence="1">Part of the 30S ribosomal subunit. Contacts proteins S9 and S11.</text>
</comment>
<comment type="similarity">
    <text evidence="1">Belongs to the universal ribosomal protein uS7 family.</text>
</comment>
<protein>
    <recommendedName>
        <fullName evidence="1">Small ribosomal subunit protein uS7</fullName>
    </recommendedName>
    <alternativeName>
        <fullName evidence="2">30S ribosomal protein S7</fullName>
    </alternativeName>
</protein>
<evidence type="ECO:0000255" key="1">
    <source>
        <dbReference type="HAMAP-Rule" id="MF_00480"/>
    </source>
</evidence>
<evidence type="ECO:0000305" key="2"/>
<proteinExistence type="inferred from homology"/>
<reference key="1">
    <citation type="journal article" date="2009" name="PLoS Pathog.">
        <title>Genomic evidence for the evolution of Streptococcus equi: host restriction, increased virulence, and genetic exchange with human pathogens.</title>
        <authorList>
            <person name="Holden M.T.G."/>
            <person name="Heather Z."/>
            <person name="Paillot R."/>
            <person name="Steward K.F."/>
            <person name="Webb K."/>
            <person name="Ainslie F."/>
            <person name="Jourdan T."/>
            <person name="Bason N.C."/>
            <person name="Holroyd N.E."/>
            <person name="Mungall K."/>
            <person name="Quail M.A."/>
            <person name="Sanders M."/>
            <person name="Simmonds M."/>
            <person name="Willey D."/>
            <person name="Brooks K."/>
            <person name="Aanensen D.M."/>
            <person name="Spratt B.G."/>
            <person name="Jolley K.A."/>
            <person name="Maiden M.C.J."/>
            <person name="Kehoe M."/>
            <person name="Chanter N."/>
            <person name="Bentley S.D."/>
            <person name="Robinson C."/>
            <person name="Maskell D.J."/>
            <person name="Parkhill J."/>
            <person name="Waller A.S."/>
        </authorList>
    </citation>
    <scope>NUCLEOTIDE SEQUENCE [LARGE SCALE GENOMIC DNA]</scope>
    <source>
        <strain>H70</strain>
    </source>
</reference>
<organism>
    <name type="scientific">Streptococcus equi subsp. zooepidemicus (strain H70)</name>
    <dbReference type="NCBI Taxonomy" id="553483"/>
    <lineage>
        <taxon>Bacteria</taxon>
        <taxon>Bacillati</taxon>
        <taxon>Bacillota</taxon>
        <taxon>Bacilli</taxon>
        <taxon>Lactobacillales</taxon>
        <taxon>Streptococcaceae</taxon>
        <taxon>Streptococcus</taxon>
    </lineage>
</organism>
<name>RS7_STRS7</name>
<gene>
    <name evidence="1" type="primary">rpsG</name>
    <name type="ordered locus">SZO_16900</name>
</gene>